<gene>
    <name type="primary">IE1</name>
</gene>
<sequence>MTQINFNASYTSASTPSRASFDNSYSEFCDKQPNDYLSYYNHPTPDGADTVISDSETAAASNFLASVNSLTDNDLVECLLKTTDNLEEAVSSAYYSESLEQPVVEQPSPSSAYHAESFEHSAGVNQPSATGTKRKLDEYLDNSQGVVGQFNKIKLRPKYKKSTIQSCATLEQTINHNTNICTVASTQEITHYFTNDFAPYLMRFDDNDYNSNRFSDHMSETGYYMFVVKKSEVKPFEIIFAKYVSNVVYEYTNNYYMVDNRVFVVTFDKIRFMISYNLVKETGIEIPHSQDVCNDETAAQNCKKCHFVDVHHTFKAALTSYFNLDMYYAQTTFVTLLQSLGERKCGFLLSKLYEMYQDKNLFTLPIMLSRKESNEIETASNNFFVSPYVSQILKYSESVQFPDNPPNKYVVDNLNLIVNKKSTLTYKYSSVANLLFNNYKYHDNIASNNNAENLKKVKKEDGSMHIVEQYLTQNVDNVKGHNFIVLSFKNEERLTIAKKNKEFYWISGEIKDVDVSQVIQKYNRFKHHMFVIGKVNRRESTTLHNNLLKLLALILQGLVPLSDAITFAEQKLNCKYKKFEFN</sequence>
<dbReference type="EMBL" id="AH002389">
    <property type="protein sequence ID" value="AAA46696.1"/>
    <property type="molecule type" value="Genomic_DNA"/>
</dbReference>
<dbReference type="EMBL" id="M16820">
    <property type="protein sequence ID" value="AAA46699.1"/>
    <property type="molecule type" value="Genomic_DNA"/>
</dbReference>
<dbReference type="EMBL" id="L22858">
    <property type="protein sequence ID" value="AAA66777.1"/>
    <property type="molecule type" value="Genomic_DNA"/>
</dbReference>
<dbReference type="EMBL" id="L22858">
    <property type="protein sequence ID" value="AAD18158.1"/>
    <property type="status" value="ALT_INIT"/>
    <property type="molecule type" value="Genomic_DNA"/>
</dbReference>
<dbReference type="PIR" id="A27838">
    <property type="entry name" value="RGNVBV"/>
</dbReference>
<dbReference type="PIR" id="A28874">
    <property type="entry name" value="RGNVE2"/>
</dbReference>
<dbReference type="PIR" id="E72868">
    <property type="entry name" value="E72868"/>
</dbReference>
<dbReference type="PIR" id="F72867">
    <property type="entry name" value="F72867"/>
</dbReference>
<dbReference type="RefSeq" id="NP_054178.1">
    <molecule id="P11138-1"/>
    <property type="nucleotide sequence ID" value="NC_001623.1"/>
</dbReference>
<dbReference type="KEGG" id="vg:1403980"/>
<dbReference type="KEGG" id="vg:1403988"/>
<dbReference type="OrthoDB" id="2402at10239"/>
<dbReference type="Proteomes" id="UP000008292">
    <property type="component" value="Segment"/>
</dbReference>
<dbReference type="GO" id="GO:0039715">
    <property type="term" value="C:nuclear viral factory"/>
    <property type="evidence" value="ECO:0000314"/>
    <property type="project" value="UniProtKB"/>
</dbReference>
<dbReference type="GO" id="GO:0003677">
    <property type="term" value="F:DNA binding"/>
    <property type="evidence" value="ECO:0007669"/>
    <property type="project" value="UniProtKB-KW"/>
</dbReference>
<dbReference type="GO" id="GO:0006260">
    <property type="term" value="P:DNA replication"/>
    <property type="evidence" value="ECO:0007669"/>
    <property type="project" value="UniProtKB-KW"/>
</dbReference>
<dbReference type="GO" id="GO:0039693">
    <property type="term" value="P:viral DNA genome replication"/>
    <property type="evidence" value="ECO:0007669"/>
    <property type="project" value="UniProtKB-KW"/>
</dbReference>
<dbReference type="GO" id="GO:0019079">
    <property type="term" value="P:viral genome replication"/>
    <property type="evidence" value="ECO:0000314"/>
    <property type="project" value="UniProtKB"/>
</dbReference>
<dbReference type="InterPro" id="IPR005092">
    <property type="entry name" value="TATR"/>
</dbReference>
<dbReference type="Pfam" id="PF03430">
    <property type="entry name" value="TATR"/>
    <property type="match status" value="1"/>
</dbReference>
<comment type="function">
    <text evidence="2 4 5">Regulatory transcriptional protein, which trans-activates gene expression from early baculovirus promoters. Can also trans-activate its own promoter, suggesting an autoregulation during infection of host cells. Also promotes viral DNA genome replication via the N-terminal region.</text>
</comment>
<comment type="subunit">
    <text evidence="3">Homodimer. Interacts with helicase and LEF-3.</text>
</comment>
<comment type="subcellular location">
    <subcellularLocation>
        <location evidence="3">Host nucleus</location>
    </subcellularLocation>
</comment>
<comment type="alternative products">
    <event type="alternative splicing"/>
    <isoform>
        <id>P11138-1</id>
        <name>Short</name>
        <sequence type="displayed"/>
    </isoform>
    <isoform>
        <id>P11138-2</id>
        <name>Long</name>
        <sequence type="not described"/>
    </isoform>
    <text>The spliced form of IE-1 was expressed only in the first 6 hours postinfection, whereas the nonspliced IE-1 transcript was expressed at constant level up to 24 hours.</text>
</comment>
<comment type="domain">
    <text evidence="5">The N-terminal region is required for origin-specific DNA replication and phosphorylation.</text>
</comment>
<comment type="PTM">
    <text evidence="5">Phosphorylated.</text>
</comment>
<comment type="miscellaneous">
    <molecule>Isoform Long</molecule>
    <text evidence="6">Contains 54 additional residues in the N-terminus.</text>
</comment>
<comment type="similarity">
    <text evidence="6">Belongs to the nucleopolyhedrovirus IE-1 protein family.</text>
</comment>
<comment type="sequence caution" evidence="6">
    <conflict type="erroneous initiation">
        <sequence resource="EMBL-CDS" id="AAD18158"/>
    </conflict>
    <text>Extended N-terminus.</text>
</comment>
<evidence type="ECO:0000256" key="1">
    <source>
        <dbReference type="SAM" id="MobiDB-lite"/>
    </source>
</evidence>
<evidence type="ECO:0000269" key="2">
    <source>
    </source>
</evidence>
<evidence type="ECO:0000269" key="3">
    <source>
    </source>
</evidence>
<evidence type="ECO:0000269" key="4">
    <source>
    </source>
</evidence>
<evidence type="ECO:0000269" key="5">
    <source>
    </source>
</evidence>
<evidence type="ECO:0000305" key="6"/>
<feature type="chain" id="PRO_0000132847" description="Trans-activating transcriptional regulatory protein">
    <location>
        <begin position="1"/>
        <end position="582"/>
    </location>
</feature>
<feature type="region of interest" description="Disordered" evidence="1">
    <location>
        <begin position="101"/>
        <end position="131"/>
    </location>
</feature>
<feature type="mutagenesis site" description="Complete loss of replicative function." evidence="5">
    <original>T</original>
    <variation>A</variation>
    <location>
        <position position="15"/>
    </location>
</feature>
<feature type="sequence conflict" description="In Ref. 2; AAA46699." evidence="6" ref="2">
    <original>A</original>
    <variation>R</variation>
    <location>
        <position position="60"/>
    </location>
</feature>
<feature type="sequence conflict" description="In Ref. 2; AAA46699." evidence="6" ref="2">
    <original>NSNRFS</original>
    <variation>QFQQVL</variation>
    <location>
        <begin position="210"/>
        <end position="215"/>
    </location>
</feature>
<feature type="sequence conflict" description="In Ref. 1; AAA46696." evidence="6" ref="1">
    <original>D</original>
    <variation>G</variation>
    <location>
        <position position="295"/>
    </location>
</feature>
<feature type="sequence conflict" description="In Ref. 2; AAA46699." evidence="6" ref="2">
    <original>FN</original>
    <variation>L</variation>
    <location>
        <begin position="581"/>
        <end position="582"/>
    </location>
</feature>
<keyword id="KW-0025">Alternative splicing</keyword>
<keyword id="KW-0235">DNA replication</keyword>
<keyword id="KW-0238">DNA-binding</keyword>
<keyword id="KW-0244">Early protein</keyword>
<keyword id="KW-1048">Host nucleus</keyword>
<keyword id="KW-0597">Phosphoprotein</keyword>
<keyword id="KW-1185">Reference proteome</keyword>
<keyword id="KW-0804">Transcription</keyword>
<keyword id="KW-0805">Transcription regulation</keyword>
<keyword id="KW-1194">Viral DNA replication</keyword>
<organism>
    <name type="scientific">Autographa californica nuclear polyhedrosis virus</name>
    <name type="common">AcMNPV</name>
    <dbReference type="NCBI Taxonomy" id="46015"/>
    <lineage>
        <taxon>Viruses</taxon>
        <taxon>Viruses incertae sedis</taxon>
        <taxon>Naldaviricetes</taxon>
        <taxon>Lefavirales</taxon>
        <taxon>Baculoviridae</taxon>
        <taxon>Alphabaculovirus</taxon>
        <taxon>Alphabaculovirus aucalifornicae</taxon>
    </lineage>
</organism>
<reference key="1">
    <citation type="journal article" date="1988" name="J. Virol.">
        <title>Multiple early transcripts and splicing of the Autographa californica nuclear polyhedrosis virus IE-1 gene.</title>
        <authorList>
            <person name="Chisholm G.E."/>
            <person name="Henner D.J."/>
        </authorList>
    </citation>
    <scope>NUCLEOTIDE SEQUENCE [GENOMIC DNA]</scope>
</reference>
<reference key="2">
    <citation type="journal article" date="1987" name="J. Virol.">
        <title>Nucleotide sequence and temporal expression of a baculovirus regulatory gene.</title>
        <authorList>
            <person name="Guarino L.A."/>
            <person name="Summers M.D."/>
        </authorList>
    </citation>
    <scope>NUCLEOTIDE SEQUENCE [GENOMIC DNA]</scope>
    <source>
        <strain>E2</strain>
    </source>
</reference>
<reference key="3">
    <citation type="journal article" date="1994" name="Virology">
        <title>The complete DNA sequence of Autographa californica nuclear polyhedrosis virus.</title>
        <authorList>
            <person name="Ayres M.D."/>
            <person name="Howard S.C."/>
            <person name="Kuzio J."/>
            <person name="Lopez-Ferber M."/>
            <person name="Possee R.D."/>
        </authorList>
    </citation>
    <scope>NUCLEOTIDE SEQUENCE [LARGE SCALE GENOMIC DNA]</scope>
    <source>
        <strain>C6</strain>
    </source>
</reference>
<reference key="4">
    <citation type="journal article" date="2000" name="Virology">
        <title>The Autographa californica nucleopolyhedrovirus IE-1 protein complex has two modes of specific DNA binding.</title>
        <authorList>
            <person name="Leisy D.J."/>
            <person name="Rohrmann G.F."/>
        </authorList>
    </citation>
    <scope>FUNCTION</scope>
</reference>
<reference key="5">
    <citation type="journal article" date="2002" name="J. Virol.">
        <title>Baculovirus transregulator IE1 requires a dimeric nuclear localization element for nuclear import and promoter activation.</title>
        <authorList>
            <person name="Olson V.A."/>
            <person name="Wetter J.A."/>
            <person name="Friesen P.D."/>
        </authorList>
    </citation>
    <scope>SUBCELLULAR LOCATION</scope>
    <scope>SUBUNIT</scope>
</reference>
<reference key="6">
    <citation type="journal article" date="2004" name="Virology">
        <title>Baculovirus proteins IE-1, LEF-3, and P143 interact with DNA in vivo: a formaldehyde cross-linking study.</title>
        <authorList>
            <person name="Ito E."/>
            <person name="Sahri D."/>
            <person name="Knippers R."/>
            <person name="Carstens E.B."/>
        </authorList>
    </citation>
    <scope>INTERACTION WITH LEF-3 AND HELI</scope>
</reference>
<reference key="7">
    <citation type="journal article" date="2010" name="Virology">
        <title>Baculoviruses deficient in ie1 gene function abrogate viral gene expression in transduced mammalian cells.</title>
        <authorList>
            <person name="Efrose R."/>
            <person name="Swevers L."/>
            <person name="Iatrou K."/>
        </authorList>
    </citation>
    <scope>FUNCTION</scope>
</reference>
<reference key="8">
    <citation type="journal article" date="2012" name="J. Virol.">
        <title>A conserved N-terminal domain mediates required DNA replication activities and phosphorylation of the transcriptional activator IE1 of Autographa californica multicapsid nucleopolyhedrovirus.</title>
        <authorList>
            <person name="Taggart D.J."/>
            <person name="Mitchell J.K."/>
            <person name="Friesen P.D."/>
        </authorList>
    </citation>
    <scope>REGION</scope>
    <scope>FUNCTION</scope>
    <scope>PHOSPHORYLATION</scope>
    <scope>MUTAGENESIS OF THR-15</scope>
</reference>
<organismHost>
    <name type="scientific">Lepidoptera</name>
    <name type="common">butterflies and moths</name>
    <dbReference type="NCBI Taxonomy" id="7088"/>
</organismHost>
<protein>
    <recommendedName>
        <fullName>Trans-activating transcriptional regulatory protein</fullName>
    </recommendedName>
    <alternativeName>
        <fullName>Immediate early protein 1</fullName>
        <shortName>IE-1</shortName>
    </alternativeName>
</protein>
<accession>P11138</accession>
<accession>Q9WIA6</accession>
<proteinExistence type="evidence at protein level"/>
<name>IE1_NPVAC</name>